<evidence type="ECO:0000250" key="1"/>
<evidence type="ECO:0000255" key="2"/>
<evidence type="ECO:0000256" key="3">
    <source>
        <dbReference type="SAM" id="MobiDB-lite"/>
    </source>
</evidence>
<evidence type="ECO:0000269" key="4">
    <source>
    </source>
</evidence>
<evidence type="ECO:0000269" key="5">
    <source>
    </source>
</evidence>
<evidence type="ECO:0000269" key="6">
    <source>
    </source>
</evidence>
<evidence type="ECO:0000269" key="7">
    <source>
    </source>
</evidence>
<evidence type="ECO:0000269" key="8">
    <source>
    </source>
</evidence>
<evidence type="ECO:0000269" key="9">
    <source>
    </source>
</evidence>
<evidence type="ECO:0000269" key="10">
    <source>
    </source>
</evidence>
<evidence type="ECO:0000303" key="11">
    <source>
    </source>
</evidence>
<evidence type="ECO:0000303" key="12">
    <source ref="4"/>
</evidence>
<evidence type="ECO:0000305" key="13"/>
<evidence type="ECO:0000305" key="14">
    <source>
    </source>
</evidence>
<evidence type="ECO:0000305" key="15">
    <source>
    </source>
</evidence>
<evidence type="ECO:0007744" key="16">
    <source>
        <dbReference type="PDB" id="1BQS"/>
    </source>
</evidence>
<evidence type="ECO:0007744" key="17">
    <source>
        <dbReference type="PDB" id="1GSM"/>
    </source>
</evidence>
<evidence type="ECO:0007744" key="18">
    <source>
        <dbReference type="PDB" id="4HBQ"/>
    </source>
</evidence>
<evidence type="ECO:0007744" key="19">
    <source>
        <dbReference type="PDB" id="4HC1"/>
    </source>
</evidence>
<evidence type="ECO:0007744" key="20">
    <source>
        <dbReference type="PDB" id="4HCR"/>
    </source>
</evidence>
<evidence type="ECO:0007744" key="21">
    <source>
        <dbReference type="PDB" id="4HD9"/>
    </source>
</evidence>
<evidence type="ECO:0007829" key="22">
    <source>
        <dbReference type="PDB" id="1BQS"/>
    </source>
</evidence>
<evidence type="ECO:0007829" key="23">
    <source>
        <dbReference type="PDB" id="4HBQ"/>
    </source>
</evidence>
<sequence>MDFGLALLLAGLLGLLLGQSLQVKPLQVEPPEPVVAVALGASRQLTCRLACADRGASVQWRGLDTSLGAVQSDTGRSVLTVRNASLSAAGTRVCVGSCGGRTFQHTVQLLVYAFPDQLTVSPAALVPGDPEVACTAHKVTPVDPNALSFSLLVGGQELEGAQALGPEVQEEEEEPQGDEDVLFRVTERWRLPPLGTPVPPALYCQATMRLPGLELSHRQAIPVLHSPTSPEPPDTTSPESPDTTSPESPDTTSQEPPDTTSPEPPDKTSPEPAPQQGSTHTPRSPGSTRTRRPEISQAGPTQGEVIPTGSSKPAGDQLPAALWTSSAVLGLLLLALPTYHLWKRCRHLAEDDTHPPASLRLLPQVSAWAGLRGTGQVGISPS</sequence>
<reference key="1">
    <citation type="journal article" date="1996" name="Immunol. Cell Biol.">
        <title>Cloning of the mucosal addressin MAdCAM-1 from human brain: identification of novel alternatively spliced transcripts.</title>
        <authorList>
            <person name="Leung E."/>
            <person name="Greene J."/>
            <person name="Ni J."/>
            <person name="Raymond L.G."/>
            <person name="Lehnert K."/>
            <person name="Langley R."/>
            <person name="Krissansen G.W."/>
        </authorList>
    </citation>
    <scope>NUCLEOTIDE SEQUENCE [MRNA] (ISOFORM 1)</scope>
    <scope>ALTERNATIVE SPLICING</scope>
    <scope>TISSUE SPECIFICITY</scope>
    <source>
        <tissue>Fetal brain</tissue>
    </source>
</reference>
<reference key="2">
    <citation type="journal article" date="1996" name="J. Immunol.">
        <title>Human mucosal addressin cell adhesion molecule-1 (MAdCAM-1) demonstrates structural and functional similarities to the alpha 4 beta 7-integrin binding domains of murine MAdCAM-1, but extreme divergence of mucin-like sequences.</title>
        <authorList>
            <person name="Shyjan A.M."/>
            <person name="Bertagnolli M."/>
            <person name="Kenney C.J."/>
            <person name="Briskin M.J."/>
        </authorList>
    </citation>
    <scope>NUCLEOTIDE SEQUENCE [MRNA] (ISOFORM 1)</scope>
    <scope>INTERACTION WITH ALPHA-4/BETA-7 INTEGRIN</scope>
    <scope>TISSUE SPECIFICITY</scope>
    <scope>POLYMORPHISM</scope>
    <scope>VARIANT PRO-GLU-SER-PRO-ASP-THR-THR-SER-GLN-GLU-PRO-PRO-ASP-THR-THR-SER-GLN-GLU-PRO-PRO-ASP-THR-THR-SER-253 INS</scope>
    <source>
        <tissue>Lymph node</tissue>
    </source>
</reference>
<reference key="3">
    <citation type="journal article" date="1997" name="Immunogenetics">
        <title>Genomic organization, chromosomal mapping, and analysis of the 5' promoter region of the human MAdCAM-1 gene.</title>
        <authorList>
            <person name="Leung E."/>
            <person name="Berg R.W."/>
            <person name="Langley R."/>
            <person name="Greene J."/>
            <person name="Raymond L.A."/>
            <person name="Augustus M."/>
            <person name="Ni J."/>
            <person name="Carter K.C."/>
            <person name="Spurr N."/>
            <person name="Choo K.H.A."/>
            <person name="Krissansen G.W."/>
        </authorList>
    </citation>
    <scope>NUCLEOTIDE SEQUENCE [GENOMIC DNA] (ISOFORMS 1 AND 2)</scope>
    <scope>POLYMORPHISM</scope>
    <scope>VARIANT PRO-GLU-SER-PRO-ASP-THR-THR-SER-GLN-GLU-PRO-PRO-ASP-THR-THR-SER-GLN-GLU-PRO-PRO-ASP-THR-THR-SER-253 INS</scope>
    <source>
        <tissue>Placenta</tissue>
    </source>
</reference>
<reference key="4">
    <citation type="submission" date="2004-08" db="EMBL/GenBank/DDBJ databases">
        <title>Novel splicing variants of some human genes.</title>
        <authorList>
            <person name="Wang P.Z."/>
            <person name="Wang F."/>
            <person name="Chang Q.S."/>
            <person name="Wang X."/>
        </authorList>
    </citation>
    <scope>NUCLEOTIDE SEQUENCE [MRNA] (ISOFORM 4)</scope>
</reference>
<reference key="5">
    <citation type="journal article" date="2004" name="Nature">
        <title>The DNA sequence and biology of human chromosome 19.</title>
        <authorList>
            <person name="Grimwood J."/>
            <person name="Gordon L.A."/>
            <person name="Olsen A.S."/>
            <person name="Terry A."/>
            <person name="Schmutz J."/>
            <person name="Lamerdin J.E."/>
            <person name="Hellsten U."/>
            <person name="Goodstein D."/>
            <person name="Couronne O."/>
            <person name="Tran-Gyamfi M."/>
            <person name="Aerts A."/>
            <person name="Altherr M."/>
            <person name="Ashworth L."/>
            <person name="Bajorek E."/>
            <person name="Black S."/>
            <person name="Branscomb E."/>
            <person name="Caenepeel S."/>
            <person name="Carrano A.V."/>
            <person name="Caoile C."/>
            <person name="Chan Y.M."/>
            <person name="Christensen M."/>
            <person name="Cleland C.A."/>
            <person name="Copeland A."/>
            <person name="Dalin E."/>
            <person name="Dehal P."/>
            <person name="Denys M."/>
            <person name="Detter J.C."/>
            <person name="Escobar J."/>
            <person name="Flowers D."/>
            <person name="Fotopulos D."/>
            <person name="Garcia C."/>
            <person name="Georgescu A.M."/>
            <person name="Glavina T."/>
            <person name="Gomez M."/>
            <person name="Gonzales E."/>
            <person name="Groza M."/>
            <person name="Hammon N."/>
            <person name="Hawkins T."/>
            <person name="Haydu L."/>
            <person name="Ho I."/>
            <person name="Huang W."/>
            <person name="Israni S."/>
            <person name="Jett J."/>
            <person name="Kadner K."/>
            <person name="Kimball H."/>
            <person name="Kobayashi A."/>
            <person name="Larionov V."/>
            <person name="Leem S.-H."/>
            <person name="Lopez F."/>
            <person name="Lou Y."/>
            <person name="Lowry S."/>
            <person name="Malfatti S."/>
            <person name="Martinez D."/>
            <person name="McCready P.M."/>
            <person name="Medina C."/>
            <person name="Morgan J."/>
            <person name="Nelson K."/>
            <person name="Nolan M."/>
            <person name="Ovcharenko I."/>
            <person name="Pitluck S."/>
            <person name="Pollard M."/>
            <person name="Popkie A.P."/>
            <person name="Predki P."/>
            <person name="Quan G."/>
            <person name="Ramirez L."/>
            <person name="Rash S."/>
            <person name="Retterer J."/>
            <person name="Rodriguez A."/>
            <person name="Rogers S."/>
            <person name="Salamov A."/>
            <person name="Salazar A."/>
            <person name="She X."/>
            <person name="Smith D."/>
            <person name="Slezak T."/>
            <person name="Solovyev V."/>
            <person name="Thayer N."/>
            <person name="Tice H."/>
            <person name="Tsai M."/>
            <person name="Ustaszewska A."/>
            <person name="Vo N."/>
            <person name="Wagner M."/>
            <person name="Wheeler J."/>
            <person name="Wu K."/>
            <person name="Xie G."/>
            <person name="Yang J."/>
            <person name="Dubchak I."/>
            <person name="Furey T.S."/>
            <person name="DeJong P."/>
            <person name="Dickson M."/>
            <person name="Gordon D."/>
            <person name="Eichler E.E."/>
            <person name="Pennacchio L.A."/>
            <person name="Richardson P."/>
            <person name="Stubbs L."/>
            <person name="Rokhsar D.S."/>
            <person name="Myers R.M."/>
            <person name="Rubin E.M."/>
            <person name="Lucas S.M."/>
        </authorList>
    </citation>
    <scope>NUCLEOTIDE SEQUENCE [LARGE SCALE GENOMIC DNA]</scope>
</reference>
<reference key="6">
    <citation type="submission" date="2005-07" db="EMBL/GenBank/DDBJ databases">
        <authorList>
            <person name="Mural R.J."/>
            <person name="Istrail S."/>
            <person name="Sutton G."/>
            <person name="Florea L."/>
            <person name="Halpern A.L."/>
            <person name="Mobarry C.M."/>
            <person name="Lippert R."/>
            <person name="Walenz B."/>
            <person name="Shatkay H."/>
            <person name="Dew I."/>
            <person name="Miller J.R."/>
            <person name="Flanigan M.J."/>
            <person name="Edwards N.J."/>
            <person name="Bolanos R."/>
            <person name="Fasulo D."/>
            <person name="Halldorsson B.V."/>
            <person name="Hannenhalli S."/>
            <person name="Turner R."/>
            <person name="Yooseph S."/>
            <person name="Lu F."/>
            <person name="Nusskern D.R."/>
            <person name="Shue B.C."/>
            <person name="Zheng X.H."/>
            <person name="Zhong F."/>
            <person name="Delcher A.L."/>
            <person name="Huson D.H."/>
            <person name="Kravitz S.A."/>
            <person name="Mouchard L."/>
            <person name="Reinert K."/>
            <person name="Remington K.A."/>
            <person name="Clark A.G."/>
            <person name="Waterman M.S."/>
            <person name="Eichler E.E."/>
            <person name="Adams M.D."/>
            <person name="Hunkapiller M.W."/>
            <person name="Myers E.W."/>
            <person name="Venter J.C."/>
        </authorList>
    </citation>
    <scope>NUCLEOTIDE SEQUENCE [LARGE SCALE GENOMIC DNA]</scope>
</reference>
<reference key="7">
    <citation type="journal article" date="2004" name="Genome Res.">
        <title>The status, quality, and expansion of the NIH full-length cDNA project: the Mammalian Gene Collection (MGC).</title>
        <authorList>
            <consortium name="The MGC Project Team"/>
        </authorList>
    </citation>
    <scope>NUCLEOTIDE SEQUENCE [LARGE SCALE MRNA] (ISOFORMS 1 AND 3)</scope>
    <scope>VARIANT PRO-GLU-SER-PRO-ASP-THR-THR-SER-GLN-GLU-PRO-PRO-ASP-THR-THR-SER-GLN-GLU-PRO-PRO-ASP-THR-THR-SER-253 INS</scope>
    <source>
        <tissue>Brain</tissue>
    </source>
</reference>
<reference key="8">
    <citation type="journal article" date="1998" name="Structure">
        <title>The structure of immunoglobulin superfamily domains 1 and 2 of MAdCAM-1 reveals novel features important for integrin recognition.</title>
        <authorList>
            <person name="Tan K."/>
            <person name="Casasnovas J.M."/>
            <person name="Liu J.H."/>
            <person name="Briskin M.J."/>
            <person name="Springer T.A."/>
            <person name="Wang J.H."/>
        </authorList>
    </citation>
    <scope>X-RAY CRYSTALLOGRAPHY (2.20 ANGSTROMS) OF 23-231</scope>
    <scope>DISULFIDE BONDS</scope>
</reference>
<reference key="9">
    <citation type="journal article" date="2002" name="Acta Crystallogr. D">
        <title>A reassessment of the MAdCAM-1 structure and its role in integrin recognition.</title>
        <authorList>
            <person name="Dando J."/>
            <person name="Wilkinson K.W."/>
            <person name="Ortlepp S."/>
            <person name="King D.J."/>
            <person name="Brady R.L."/>
        </authorList>
    </citation>
    <scope>X-RAY CRYSTALLOGRAPHY (1.90 ANGSTROMS) OF 19-224</scope>
    <scope>DISULFIDE BONDS</scope>
</reference>
<reference key="10">
    <citation type="journal article" date="2013" name="J. Biol. Chem.">
        <title>Domain 1 of mucosal addressin cell adhesion molecule has an I1-set fold and a flexible integrin-binding loop.</title>
        <authorList>
            <person name="Yu Y."/>
            <person name="Zhu J."/>
            <person name="Huang P.S."/>
            <person name="Wang J.H."/>
            <person name="Pullen N."/>
            <person name="Springer T.A."/>
        </authorList>
    </citation>
    <scope>X-RAY CRYSTALLOGRAPHY (1.70 ANGSTROMS) OF 23-225</scope>
    <scope>DISULFIDE BONDS</scope>
    <scope>GLYCOSYLATION AT ASN-83</scope>
</reference>
<feature type="signal peptide" evidence="2">
    <location>
        <begin position="1"/>
        <end position="18"/>
    </location>
</feature>
<feature type="chain" id="PRO_0000014853" description="Mucosal addressin cell adhesion molecule 1">
    <location>
        <begin position="19"/>
        <end position="382"/>
    </location>
</feature>
<feature type="topological domain" description="Extracellular" evidence="2">
    <location>
        <begin position="19"/>
        <end position="317"/>
    </location>
</feature>
<feature type="transmembrane region" description="Helical" evidence="2">
    <location>
        <begin position="318"/>
        <end position="338"/>
    </location>
</feature>
<feature type="topological domain" description="Cytoplasmic" evidence="2">
    <location>
        <begin position="339"/>
        <end position="382"/>
    </location>
</feature>
<feature type="domain" description="Ig-like 1">
    <location>
        <begin position="23"/>
        <end position="112"/>
    </location>
</feature>
<feature type="domain" description="Ig-like 2">
    <location>
        <begin position="113"/>
        <end position="231"/>
    </location>
</feature>
<feature type="repeat" description="1; truncated">
    <location>
        <begin position="228"/>
        <end position="231"/>
    </location>
</feature>
<feature type="repeat" description="2">
    <location>
        <begin position="232"/>
        <end position="239"/>
    </location>
</feature>
<feature type="repeat" description="3">
    <location>
        <begin position="240"/>
        <end position="247"/>
    </location>
</feature>
<feature type="repeat" description="4">
    <location>
        <begin position="248"/>
        <end position="255"/>
    </location>
</feature>
<feature type="repeat" description="5">
    <location>
        <begin position="256"/>
        <end position="263"/>
    </location>
</feature>
<feature type="repeat" description="6">
    <location>
        <begin position="264"/>
        <end position="271"/>
    </location>
</feature>
<feature type="region of interest" description="Disordered" evidence="3">
    <location>
        <begin position="223"/>
        <end position="314"/>
    </location>
</feature>
<feature type="region of interest" description="Mucin-like">
    <location>
        <begin position="226"/>
        <end position="317"/>
    </location>
</feature>
<feature type="region of interest" description="5.5 X 8 AA tandem repeats of [PS]-P-D-T-T-S-[QP]-E">
    <location>
        <begin position="228"/>
        <end position="271"/>
    </location>
</feature>
<feature type="compositionally biased region" description="Low complexity" evidence="3">
    <location>
        <begin position="236"/>
        <end position="261"/>
    </location>
</feature>
<feature type="compositionally biased region" description="Low complexity" evidence="3">
    <location>
        <begin position="277"/>
        <end position="288"/>
    </location>
</feature>
<feature type="glycosylation site" description="N-linked (GlcNAc...) asparagine" evidence="2 6">
    <location>
        <position position="83"/>
    </location>
</feature>
<feature type="disulfide bond" evidence="4 6 10 16 17 18 19 20 21">
    <location>
        <begin position="47"/>
        <end position="94"/>
    </location>
</feature>
<feature type="disulfide bond" evidence="4 6 10 16 17 18 19 20 21">
    <location>
        <begin position="51"/>
        <end position="98"/>
    </location>
</feature>
<feature type="disulfide bond" evidence="4 6 10 16 17 18 19 20 21">
    <location>
        <begin position="134"/>
        <end position="204"/>
    </location>
</feature>
<feature type="splice variant" id="VSP_047694" description="In isoform 4." evidence="12">
    <location>
        <begin position="18"/>
        <end position="112"/>
    </location>
</feature>
<feature type="splice variant" id="VSP_050014" description="In isoform 2." evidence="13">
    <original>VLHSPTSPEPPDTTSPESPDTTSPESPDTTSQEPPDTTSPEPPDKTSPEPAPQQGSTHTPRSPGSTRTRRPEISQAGPTQGEVIPTGSSKPAGDQLPAALWTSSAVLGLLLL</original>
    <variation>A</variation>
    <location>
        <begin position="223"/>
        <end position="334"/>
    </location>
</feature>
<feature type="splice variant" id="VSP_043202" description="In isoform 3 and isoform 4." evidence="11 12">
    <original>VLHSPTSPEPPDTTSPESPDTTSPESPDTTSQEPPDTTSPEPPDKTSPEPAPQQGSTHTPRSPGSTRTRRPEISQAGPTQGEVIPTGS</original>
    <variation>A</variation>
    <location>
        <begin position="223"/>
        <end position="310"/>
    </location>
</feature>
<feature type="sequence variant" id="VAR_047901" evidence="5 7 9">
    <original>S</original>
    <variation>SPESPDTTSQEPPDTTSQEPPDTTS</variation>
    <location>
        <position position="253"/>
    </location>
</feature>
<feature type="sequence variant" id="VAR_017580" description="In dbSNP:rs3745925.">
    <original>P</original>
    <variation>H</variation>
    <location>
        <position position="300"/>
    </location>
</feature>
<feature type="sequence conflict" description="In Ref. 2; AAB02194 and 3; AAC51354." evidence="13" ref="2 3">
    <original>S</original>
    <variation>P</variation>
    <location>
        <position position="240"/>
    </location>
</feature>
<feature type="sequence conflict" description="In Ref. 2; AAB02194 and 3; AAC51354." evidence="13" ref="2 3">
    <original>D</original>
    <variation>N</variation>
    <location>
        <position position="242"/>
    </location>
</feature>
<feature type="sequence conflict" description="In Ref. 1; AAC13661." evidence="13" ref="1">
    <original>Q</original>
    <variation>P</variation>
    <location>
        <position position="254"/>
    </location>
</feature>
<feature type="strand" evidence="23">
    <location>
        <begin position="25"/>
        <end position="30"/>
    </location>
</feature>
<feature type="strand" evidence="23">
    <location>
        <begin position="33"/>
        <end position="38"/>
    </location>
</feature>
<feature type="strand" evidence="23">
    <location>
        <begin position="43"/>
        <end position="49"/>
    </location>
</feature>
<feature type="strand" evidence="22">
    <location>
        <begin position="52"/>
        <end position="54"/>
    </location>
</feature>
<feature type="strand" evidence="23">
    <location>
        <begin position="57"/>
        <end position="62"/>
    </location>
</feature>
<feature type="turn" evidence="23">
    <location>
        <begin position="64"/>
        <end position="67"/>
    </location>
</feature>
<feature type="strand" evidence="23">
    <location>
        <begin position="69"/>
        <end position="83"/>
    </location>
</feature>
<feature type="helix" evidence="23">
    <location>
        <begin position="86"/>
        <end position="88"/>
    </location>
</feature>
<feature type="strand" evidence="23">
    <location>
        <begin position="90"/>
        <end position="98"/>
    </location>
</feature>
<feature type="strand" evidence="23">
    <location>
        <begin position="101"/>
        <end position="113"/>
    </location>
</feature>
<feature type="strand" evidence="23">
    <location>
        <begin position="116"/>
        <end position="125"/>
    </location>
</feature>
<feature type="strand" evidence="23">
    <location>
        <begin position="131"/>
        <end position="140"/>
    </location>
</feature>
<feature type="turn" evidence="23">
    <location>
        <begin position="144"/>
        <end position="146"/>
    </location>
</feature>
<feature type="strand" evidence="23">
    <location>
        <begin position="147"/>
        <end position="153"/>
    </location>
</feature>
<feature type="strand" evidence="23">
    <location>
        <begin position="167"/>
        <end position="171"/>
    </location>
</feature>
<feature type="strand" evidence="22">
    <location>
        <begin position="175"/>
        <end position="177"/>
    </location>
</feature>
<feature type="strand" evidence="23">
    <location>
        <begin position="180"/>
        <end position="190"/>
    </location>
</feature>
<feature type="strand" evidence="23">
    <location>
        <begin position="200"/>
        <end position="210"/>
    </location>
</feature>
<feature type="strand" evidence="23">
    <location>
        <begin position="213"/>
        <end position="223"/>
    </location>
</feature>
<gene>
    <name type="primary">MADCAM1</name>
</gene>
<keyword id="KW-0002">3D-structure</keyword>
<keyword id="KW-0025">Alternative splicing</keyword>
<keyword id="KW-0130">Cell adhesion</keyword>
<keyword id="KW-1015">Disulfide bond</keyword>
<keyword id="KW-0325">Glycoprotein</keyword>
<keyword id="KW-0393">Immunoglobulin domain</keyword>
<keyword id="KW-0472">Membrane</keyword>
<keyword id="KW-1267">Proteomics identification</keyword>
<keyword id="KW-1185">Reference proteome</keyword>
<keyword id="KW-0677">Repeat</keyword>
<keyword id="KW-0732">Signal</keyword>
<keyword id="KW-0812">Transmembrane</keyword>
<keyword id="KW-1133">Transmembrane helix</keyword>
<protein>
    <recommendedName>
        <fullName>Mucosal addressin cell adhesion molecule 1</fullName>
        <shortName>MAdCAM-1</shortName>
        <shortName>hMAdCAM-1</shortName>
    </recommendedName>
</protein>
<accession>Q13477</accession>
<accession>A5PKV4</accession>
<accession>B2RPL9</accession>
<accession>O60222</accession>
<accession>O75867</accession>
<accession>Q5UGI7</accession>
<name>MADCA_HUMAN</name>
<comment type="function">
    <text>Cell adhesion leukocyte receptor expressed by mucosal venules, helps to direct lymphocyte traffic into mucosal tissues including the Peyer patches and the intestinal lamina propria. It can bind both integrin alpha-4/beta-7 and L-selectin, regulating both the passage and retention of leukocytes. Isoform 2, lacking the mucin-like domain, may be specialized in supporting integrin alpha-4/beta-7-dependent adhesion strengthening, independent of L-selectin binding.</text>
</comment>
<comment type="subunit">
    <text evidence="13">Homodimer.</text>
</comment>
<comment type="subcellular location">
    <subcellularLocation>
        <location>Membrane</location>
        <topology>Single-pass type I membrane protein</topology>
    </subcellularLocation>
</comment>
<comment type="alternative products">
    <event type="alternative splicing"/>
    <isoform>
        <id>Q13477-1</id>
        <name>1</name>
        <sequence type="displayed"/>
    </isoform>
    <isoform>
        <id>Q13477-2</id>
        <name>2</name>
        <sequence type="described" ref="VSP_050014"/>
    </isoform>
    <isoform>
        <id>Q13477-3</id>
        <name>3</name>
        <sequence type="described" ref="VSP_043202"/>
    </isoform>
    <isoform>
        <id>Q13477-4</id>
        <name>4</name>
        <sequence type="described" ref="VSP_047694 VSP_043202"/>
    </isoform>
    <text>Additional isoforms seem to exist.</text>
</comment>
<comment type="tissue specificity">
    <text evidence="7 8">Highly expressed on high endothelial venules (HEV) and lamina propia venules found in the small intestine, and to a lesser extent in the colon and spleen. Very low levels of expression found in pancreas and brain. Not expressed in the thymus, prostate, ovaries, testis, heart, placenta, lung, liver, skeletal muscle, kidney or peripheral blood leukocytes.</text>
</comment>
<comment type="PTM">
    <text evidence="1">The Ser/Thr-rich mucin-like domain may provide possible sites for O-glycosylation.</text>
</comment>
<comment type="polymorphism">
    <text evidence="14 15">The number of repeats in the mucin domain varies between 5 and 8 repeats.</text>
</comment>
<proteinExistence type="evidence at protein level"/>
<organism>
    <name type="scientific">Homo sapiens</name>
    <name type="common">Human</name>
    <dbReference type="NCBI Taxonomy" id="9606"/>
    <lineage>
        <taxon>Eukaryota</taxon>
        <taxon>Metazoa</taxon>
        <taxon>Chordata</taxon>
        <taxon>Craniata</taxon>
        <taxon>Vertebrata</taxon>
        <taxon>Euteleostomi</taxon>
        <taxon>Mammalia</taxon>
        <taxon>Eutheria</taxon>
        <taxon>Euarchontoglires</taxon>
        <taxon>Primates</taxon>
        <taxon>Haplorrhini</taxon>
        <taxon>Catarrhini</taxon>
        <taxon>Hominidae</taxon>
        <taxon>Homo</taxon>
    </lineage>
</organism>
<dbReference type="EMBL" id="U43628">
    <property type="protein sequence ID" value="AAB02194.1"/>
    <property type="molecule type" value="mRNA"/>
</dbReference>
<dbReference type="EMBL" id="U80016">
    <property type="protein sequence ID" value="AAC51354.1"/>
    <property type="molecule type" value="Genomic_DNA"/>
</dbReference>
<dbReference type="EMBL" id="U80012">
    <property type="protein sequence ID" value="AAC51354.1"/>
    <property type="status" value="JOINED"/>
    <property type="molecule type" value="Genomic_DNA"/>
</dbReference>
<dbReference type="EMBL" id="U80013">
    <property type="protein sequence ID" value="AAC51354.1"/>
    <property type="status" value="JOINED"/>
    <property type="molecule type" value="Genomic_DNA"/>
</dbReference>
<dbReference type="EMBL" id="U80014">
    <property type="protein sequence ID" value="AAC51354.1"/>
    <property type="status" value="JOINED"/>
    <property type="molecule type" value="Genomic_DNA"/>
</dbReference>
<dbReference type="EMBL" id="U80015">
    <property type="protein sequence ID" value="AAC51354.1"/>
    <property type="status" value="JOINED"/>
    <property type="molecule type" value="Genomic_DNA"/>
</dbReference>
<dbReference type="EMBL" id="U82483">
    <property type="protein sequence ID" value="AAC13661.1"/>
    <property type="molecule type" value="mRNA"/>
</dbReference>
<dbReference type="EMBL" id="AY732484">
    <property type="protein sequence ID" value="AAV33123.1"/>
    <property type="molecule type" value="mRNA"/>
</dbReference>
<dbReference type="EMBL" id="AC005775">
    <property type="protein sequence ID" value="AAC62844.1"/>
    <property type="molecule type" value="Genomic_DNA"/>
</dbReference>
<dbReference type="EMBL" id="CH471242">
    <property type="protein sequence ID" value="EAW61195.1"/>
    <property type="molecule type" value="Genomic_DNA"/>
</dbReference>
<dbReference type="EMBL" id="BC137506">
    <property type="protein sequence ID" value="AAI37507.1"/>
    <property type="molecule type" value="mRNA"/>
</dbReference>
<dbReference type="EMBL" id="BC137507">
    <property type="protein sequence ID" value="AAI37508.1"/>
    <property type="molecule type" value="mRNA"/>
</dbReference>
<dbReference type="EMBL" id="BC144065">
    <property type="protein sequence ID" value="AAI44066.1"/>
    <property type="molecule type" value="mRNA"/>
</dbReference>
<dbReference type="EMBL" id="BC142629">
    <property type="protein sequence ID" value="AAI42630.1"/>
    <property type="molecule type" value="mRNA"/>
</dbReference>
<dbReference type="CCDS" id="CCDS12028.1">
    <molecule id="Q13477-1"/>
</dbReference>
<dbReference type="CCDS" id="CCDS12029.1">
    <molecule id="Q13477-3"/>
</dbReference>
<dbReference type="RefSeq" id="NP_570116.2">
    <molecule id="Q13477-1"/>
    <property type="nucleotide sequence ID" value="NM_130760.3"/>
</dbReference>
<dbReference type="RefSeq" id="NP_570118.1">
    <molecule id="Q13477-3"/>
    <property type="nucleotide sequence ID" value="NM_130762.3"/>
</dbReference>
<dbReference type="PDB" id="1BQS">
    <property type="method" value="X-ray"/>
    <property type="resolution" value="2.20 A"/>
    <property type="chains" value="A=23-231"/>
</dbReference>
<dbReference type="PDB" id="1GSM">
    <property type="method" value="X-ray"/>
    <property type="resolution" value="1.90 A"/>
    <property type="chains" value="A=19-224"/>
</dbReference>
<dbReference type="PDB" id="4HBQ">
    <property type="method" value="X-ray"/>
    <property type="resolution" value="1.40 A"/>
    <property type="chains" value="A/B=23-171, A/B=180-224"/>
</dbReference>
<dbReference type="PDB" id="4HC1">
    <property type="method" value="X-ray"/>
    <property type="resolution" value="2.87 A"/>
    <property type="chains" value="A/B=23-171, A/B=180-224"/>
</dbReference>
<dbReference type="PDB" id="4HCR">
    <property type="method" value="X-ray"/>
    <property type="resolution" value="2.30 A"/>
    <property type="chains" value="A/B=23-225"/>
</dbReference>
<dbReference type="PDB" id="4HD9">
    <property type="method" value="X-ray"/>
    <property type="resolution" value="1.70 A"/>
    <property type="chains" value="A=23-225"/>
</dbReference>
<dbReference type="PDBsum" id="1BQS"/>
<dbReference type="PDBsum" id="1GSM"/>
<dbReference type="PDBsum" id="4HBQ"/>
<dbReference type="PDBsum" id="4HC1"/>
<dbReference type="PDBsum" id="4HCR"/>
<dbReference type="PDBsum" id="4HD9"/>
<dbReference type="SMR" id="Q13477"/>
<dbReference type="BioGRID" id="113825">
    <property type="interactions" value="5"/>
</dbReference>
<dbReference type="CORUM" id="Q13477"/>
<dbReference type="FunCoup" id="Q13477">
    <property type="interactions" value="438"/>
</dbReference>
<dbReference type="IntAct" id="Q13477">
    <property type="interactions" value="4"/>
</dbReference>
<dbReference type="STRING" id="9606.ENSP00000215637"/>
<dbReference type="BindingDB" id="Q13477"/>
<dbReference type="ChEMBL" id="CHEMBL4467"/>
<dbReference type="GlyCosmos" id="Q13477">
    <property type="glycosylation" value="1 site, No reported glycans"/>
</dbReference>
<dbReference type="GlyGen" id="Q13477">
    <property type="glycosylation" value="4 sites, 1 N-linked glycan (1 site), 1 O-linked glycan (2 sites)"/>
</dbReference>
<dbReference type="iPTMnet" id="Q13477"/>
<dbReference type="PhosphoSitePlus" id="Q13477"/>
<dbReference type="BioMuta" id="MADCAM1"/>
<dbReference type="DMDM" id="218511712"/>
<dbReference type="jPOST" id="Q13477"/>
<dbReference type="MassIVE" id="Q13477"/>
<dbReference type="PaxDb" id="9606-ENSP00000215637"/>
<dbReference type="PeptideAtlas" id="Q13477"/>
<dbReference type="ProteomicsDB" id="59473">
    <molecule id="Q13477-1"/>
</dbReference>
<dbReference type="ProteomicsDB" id="59474">
    <molecule id="Q13477-2"/>
</dbReference>
<dbReference type="ProteomicsDB" id="59475">
    <molecule id="Q13477-3"/>
</dbReference>
<dbReference type="ProteomicsDB" id="65247"/>
<dbReference type="ABCD" id="Q13477">
    <property type="antibodies" value="18 sequenced antibodies"/>
</dbReference>
<dbReference type="Antibodypedia" id="9993">
    <property type="antibodies" value="786 antibodies from 36 providers"/>
</dbReference>
<dbReference type="DNASU" id="8174"/>
<dbReference type="Ensembl" id="ENST00000215637.8">
    <molecule id="Q13477-1"/>
    <property type="protein sequence ID" value="ENSP00000215637.2"/>
    <property type="gene ID" value="ENSG00000099866.16"/>
</dbReference>
<dbReference type="Ensembl" id="ENST00000346144.8">
    <molecule id="Q13477-3"/>
    <property type="protein sequence ID" value="ENSP00000304247.2"/>
    <property type="gene ID" value="ENSG00000099866.16"/>
</dbReference>
<dbReference type="Ensembl" id="ENST00000382683.8">
    <molecule id="Q13477-4"/>
    <property type="protein sequence ID" value="ENSP00000372130.4"/>
    <property type="gene ID" value="ENSG00000099866.16"/>
</dbReference>
<dbReference type="GeneID" id="8174"/>
<dbReference type="KEGG" id="hsa:8174"/>
<dbReference type="MANE-Select" id="ENST00000215637.8">
    <property type="protein sequence ID" value="ENSP00000215637.2"/>
    <property type="RefSeq nucleotide sequence ID" value="NM_130760.3"/>
    <property type="RefSeq protein sequence ID" value="NP_570116.2"/>
</dbReference>
<dbReference type="UCSC" id="uc002los.4">
    <molecule id="Q13477-1"/>
    <property type="organism name" value="human"/>
</dbReference>
<dbReference type="AGR" id="HGNC:6765"/>
<dbReference type="CTD" id="8174"/>
<dbReference type="DisGeNET" id="8174"/>
<dbReference type="GeneCards" id="MADCAM1"/>
<dbReference type="HGNC" id="HGNC:6765">
    <property type="gene designation" value="MADCAM1"/>
</dbReference>
<dbReference type="HPA" id="ENSG00000099866">
    <property type="expression patterns" value="Tissue enhanced (intestine, lymphoid tissue)"/>
</dbReference>
<dbReference type="MIM" id="102670">
    <property type="type" value="gene"/>
</dbReference>
<dbReference type="neXtProt" id="NX_Q13477"/>
<dbReference type="OpenTargets" id="ENSG00000099866"/>
<dbReference type="PharmGKB" id="PA30522"/>
<dbReference type="VEuPathDB" id="HostDB:ENSG00000099866"/>
<dbReference type="eggNOG" id="ENOG502SR0W">
    <property type="taxonomic scope" value="Eukaryota"/>
</dbReference>
<dbReference type="GeneTree" id="ENSGT00510000049549"/>
<dbReference type="HOGENOM" id="CLU_056743_1_0_1"/>
<dbReference type="InParanoid" id="Q13477"/>
<dbReference type="OrthoDB" id="9907246at2759"/>
<dbReference type="PAN-GO" id="Q13477">
    <property type="GO annotations" value="5 GO annotations based on evolutionary models"/>
</dbReference>
<dbReference type="PhylomeDB" id="Q13477"/>
<dbReference type="TreeFam" id="TF337571"/>
<dbReference type="PathwayCommons" id="Q13477"/>
<dbReference type="Reactome" id="R-HSA-198933">
    <molecule id="Q13477-1"/>
    <property type="pathway name" value="Immunoregulatory interactions between a Lymphoid and a non-Lymphoid cell"/>
</dbReference>
<dbReference type="Reactome" id="R-HSA-216083">
    <molecule id="Q13477-1"/>
    <property type="pathway name" value="Integrin cell surface interactions"/>
</dbReference>
<dbReference type="SignaLink" id="Q13477"/>
<dbReference type="SIGNOR" id="Q13477"/>
<dbReference type="BioGRID-ORCS" id="8174">
    <property type="hits" value="15 hits in 1143 CRISPR screens"/>
</dbReference>
<dbReference type="EvolutionaryTrace" id="Q13477"/>
<dbReference type="GeneWiki" id="Addressin"/>
<dbReference type="GenomeRNAi" id="8174"/>
<dbReference type="Pharos" id="Q13477">
    <property type="development level" value="Tbio"/>
</dbReference>
<dbReference type="PRO" id="PR:Q13477"/>
<dbReference type="Proteomes" id="UP000005640">
    <property type="component" value="Chromosome 19"/>
</dbReference>
<dbReference type="RNAct" id="Q13477">
    <property type="molecule type" value="protein"/>
</dbReference>
<dbReference type="Bgee" id="ENSG00000099866">
    <property type="expression patterns" value="Expressed in primordial germ cell in gonad and 127 other cell types or tissues"/>
</dbReference>
<dbReference type="ExpressionAtlas" id="Q13477">
    <property type="expression patterns" value="baseline and differential"/>
</dbReference>
<dbReference type="GO" id="GO:0016020">
    <property type="term" value="C:membrane"/>
    <property type="evidence" value="ECO:0000304"/>
    <property type="project" value="ProtInc"/>
</dbReference>
<dbReference type="GO" id="GO:0005886">
    <property type="term" value="C:plasma membrane"/>
    <property type="evidence" value="ECO:0000304"/>
    <property type="project" value="Reactome"/>
</dbReference>
<dbReference type="GO" id="GO:0098640">
    <property type="term" value="F:integrin binding involved in cell-matrix adhesion"/>
    <property type="evidence" value="ECO:0000314"/>
    <property type="project" value="UniProtKB"/>
</dbReference>
<dbReference type="GO" id="GO:0007155">
    <property type="term" value="P:cell adhesion"/>
    <property type="evidence" value="ECO:0000304"/>
    <property type="project" value="ProtInc"/>
</dbReference>
<dbReference type="GO" id="GO:0007160">
    <property type="term" value="P:cell-matrix adhesion"/>
    <property type="evidence" value="ECO:0000314"/>
    <property type="project" value="UniProtKB"/>
</dbReference>
<dbReference type="GO" id="GO:0034113">
    <property type="term" value="P:heterotypic cell-cell adhesion"/>
    <property type="evidence" value="ECO:0000315"/>
    <property type="project" value="UniProtKB"/>
</dbReference>
<dbReference type="GO" id="GO:0006955">
    <property type="term" value="P:immune response"/>
    <property type="evidence" value="ECO:0000304"/>
    <property type="project" value="ProtInc"/>
</dbReference>
<dbReference type="GO" id="GO:0007229">
    <property type="term" value="P:integrin-mediated signaling pathway"/>
    <property type="evidence" value="ECO:0000314"/>
    <property type="project" value="UniProtKB"/>
</dbReference>
<dbReference type="GO" id="GO:0050901">
    <property type="term" value="P:leukocyte tethering or rolling"/>
    <property type="evidence" value="ECO:0000314"/>
    <property type="project" value="UniProtKB"/>
</dbReference>
<dbReference type="GO" id="GO:0002687">
    <property type="term" value="P:positive regulation of leukocyte migration"/>
    <property type="evidence" value="ECO:0000318"/>
    <property type="project" value="GO_Central"/>
</dbReference>
<dbReference type="GO" id="GO:2000403">
    <property type="term" value="P:positive regulation of lymphocyte migration"/>
    <property type="evidence" value="ECO:0007669"/>
    <property type="project" value="InterPro"/>
</dbReference>
<dbReference type="GO" id="GO:0043113">
    <property type="term" value="P:receptor clustering"/>
    <property type="evidence" value="ECO:0000314"/>
    <property type="project" value="UniProtKB"/>
</dbReference>
<dbReference type="GO" id="GO:0007165">
    <property type="term" value="P:signal transduction"/>
    <property type="evidence" value="ECO:0000304"/>
    <property type="project" value="ProtInc"/>
</dbReference>
<dbReference type="CDD" id="cd20942">
    <property type="entry name" value="IgI_MAdCAM-1"/>
    <property type="match status" value="1"/>
</dbReference>
<dbReference type="FunFam" id="2.60.40.10:FF:000194">
    <property type="entry name" value="Intercellular adhesion molecule 1"/>
    <property type="match status" value="1"/>
</dbReference>
<dbReference type="FunFam" id="2.60.40.10:FF:000933">
    <property type="entry name" value="Mucosal addressin cell adhesion molecule 1"/>
    <property type="match status" value="1"/>
</dbReference>
<dbReference type="Gene3D" id="2.60.40.10">
    <property type="entry name" value="Immunoglobulins"/>
    <property type="match status" value="2"/>
</dbReference>
<dbReference type="InterPro" id="IPR015169">
    <property type="entry name" value="Adhes-Ig-like"/>
</dbReference>
<dbReference type="InterPro" id="IPR007110">
    <property type="entry name" value="Ig-like_dom"/>
</dbReference>
<dbReference type="InterPro" id="IPR036179">
    <property type="entry name" value="Ig-like_dom_sf"/>
</dbReference>
<dbReference type="InterPro" id="IPR013783">
    <property type="entry name" value="Ig-like_fold"/>
</dbReference>
<dbReference type="InterPro" id="IPR003599">
    <property type="entry name" value="Ig_sub"/>
</dbReference>
<dbReference type="InterPro" id="IPR037413">
    <property type="entry name" value="MADCAM1"/>
</dbReference>
<dbReference type="PANTHER" id="PTHR14162:SF1">
    <property type="entry name" value="MUCOSAL ADDRESSIN CELL ADHESION MOLECULE 1"/>
    <property type="match status" value="1"/>
</dbReference>
<dbReference type="PANTHER" id="PTHR14162">
    <property type="entry name" value="MUCOSAL ADDRESSIN CELL ADHESION MOLECULE-1"/>
    <property type="match status" value="1"/>
</dbReference>
<dbReference type="Pfam" id="PF09085">
    <property type="entry name" value="Adhes-Ig_like"/>
    <property type="match status" value="1"/>
</dbReference>
<dbReference type="SMART" id="SM00409">
    <property type="entry name" value="IG"/>
    <property type="match status" value="1"/>
</dbReference>
<dbReference type="SUPFAM" id="SSF48726">
    <property type="entry name" value="Immunoglobulin"/>
    <property type="match status" value="2"/>
</dbReference>
<dbReference type="PROSITE" id="PS50835">
    <property type="entry name" value="IG_LIKE"/>
    <property type="match status" value="1"/>
</dbReference>